<name>PCKA_SHIDS</name>
<organism>
    <name type="scientific">Shigella dysenteriae serotype 1 (strain Sd197)</name>
    <dbReference type="NCBI Taxonomy" id="300267"/>
    <lineage>
        <taxon>Bacteria</taxon>
        <taxon>Pseudomonadati</taxon>
        <taxon>Pseudomonadota</taxon>
        <taxon>Gammaproteobacteria</taxon>
        <taxon>Enterobacterales</taxon>
        <taxon>Enterobacteriaceae</taxon>
        <taxon>Shigella</taxon>
    </lineage>
</organism>
<accession>Q32AL7</accession>
<comment type="function">
    <text evidence="1">Involved in the gluconeogenesis. Catalyzes the conversion of oxaloacetate (OAA) to phosphoenolpyruvate (PEP) through direct phosphoryl transfer between the nucleoside triphosphate and OAA.</text>
</comment>
<comment type="catalytic activity">
    <reaction evidence="1">
        <text>oxaloacetate + ATP = phosphoenolpyruvate + ADP + CO2</text>
        <dbReference type="Rhea" id="RHEA:18617"/>
        <dbReference type="ChEBI" id="CHEBI:16452"/>
        <dbReference type="ChEBI" id="CHEBI:16526"/>
        <dbReference type="ChEBI" id="CHEBI:30616"/>
        <dbReference type="ChEBI" id="CHEBI:58702"/>
        <dbReference type="ChEBI" id="CHEBI:456216"/>
        <dbReference type="EC" id="4.1.1.49"/>
    </reaction>
</comment>
<comment type="cofactor">
    <cofactor evidence="1">
        <name>Mn(2+)</name>
        <dbReference type="ChEBI" id="CHEBI:29035"/>
    </cofactor>
    <text evidence="1">Binds 1 Mn(2+) ion per subunit.</text>
</comment>
<comment type="pathway">
    <text evidence="1">Carbohydrate biosynthesis; gluconeogenesis.</text>
</comment>
<comment type="subunit">
    <text evidence="1">Monomer.</text>
</comment>
<comment type="subcellular location">
    <subcellularLocation>
        <location evidence="1">Cytoplasm</location>
    </subcellularLocation>
</comment>
<comment type="similarity">
    <text evidence="1">Belongs to the phosphoenolpyruvate carboxykinase (ATP) family.</text>
</comment>
<gene>
    <name evidence="1" type="primary">pckA</name>
    <name type="ordered locus">SDY_3673</name>
</gene>
<reference key="1">
    <citation type="journal article" date="2005" name="Nucleic Acids Res.">
        <title>Genome dynamics and diversity of Shigella species, the etiologic agents of bacillary dysentery.</title>
        <authorList>
            <person name="Yang F."/>
            <person name="Yang J."/>
            <person name="Zhang X."/>
            <person name="Chen L."/>
            <person name="Jiang Y."/>
            <person name="Yan Y."/>
            <person name="Tang X."/>
            <person name="Wang J."/>
            <person name="Xiong Z."/>
            <person name="Dong J."/>
            <person name="Xue Y."/>
            <person name="Zhu Y."/>
            <person name="Xu X."/>
            <person name="Sun L."/>
            <person name="Chen S."/>
            <person name="Nie H."/>
            <person name="Peng J."/>
            <person name="Xu J."/>
            <person name="Wang Y."/>
            <person name="Yuan Z."/>
            <person name="Wen Y."/>
            <person name="Yao Z."/>
            <person name="Shen Y."/>
            <person name="Qiang B."/>
            <person name="Hou Y."/>
            <person name="Yu J."/>
            <person name="Jin Q."/>
        </authorList>
    </citation>
    <scope>NUCLEOTIDE SEQUENCE [LARGE SCALE GENOMIC DNA]</scope>
    <source>
        <strain>Sd197</strain>
    </source>
</reference>
<proteinExistence type="inferred from homology"/>
<sequence length="540" mass="59715">MRVNNGLTPQELEAYGISDVHDIVYNPSYDLLYQEELDPSLTGYERGVLTNLGAVAVDTGIFTGRSPKDKYIVRDDTTRDTFWWADKGKGKNDNKPLSPETWQHLKGLVTKQLSGKRLFVVDAFCGANPDTRLSVRFITEVAWQAHFVKNMFIRPSDEELAGFKPDFIVMNGAKCTNPQWKEQRLNSENFVAFNLTERMQLIGGTWYGGEMKKGMFSMMNYLLPLKGIASMHCSANVGEKGDVAVFFGLSGTGKTTLSTDPKRRLIGDDEHGWDDDGVFNFEGGCYAKTIKLSKEAEPEIYNAIRRDALLENVTVREDGTIDFDDGSKTENTRVSYPIYHIDNIVKPVSKAGHATKVIFLTADAFGVLPPVSRLTADQTQYHFLSGFTAKLAGTERGITEPTPTFSACFGAAFLSLHPTQYAEVLVKRMQAAGAQAYLVNTGWNGTGKRISIKDTRAIIDAILNGSLDNAETFTLPMFNLAIPTELPGVDTKILDPRNTYASPEQWQEKAETLAKLFIDNFDKYTDTPAGAALVAAGPKL</sequence>
<feature type="chain" id="PRO_0000236943" description="Phosphoenolpyruvate carboxykinase (ATP)">
    <location>
        <begin position="1"/>
        <end position="540"/>
    </location>
</feature>
<feature type="binding site" evidence="1">
    <location>
        <position position="65"/>
    </location>
    <ligand>
        <name>substrate</name>
    </ligand>
</feature>
<feature type="binding site" evidence="1">
    <location>
        <position position="207"/>
    </location>
    <ligand>
        <name>substrate</name>
    </ligand>
</feature>
<feature type="binding site" evidence="1">
    <location>
        <position position="213"/>
    </location>
    <ligand>
        <name>ATP</name>
        <dbReference type="ChEBI" id="CHEBI:30616"/>
    </ligand>
</feature>
<feature type="binding site" evidence="1">
    <location>
        <position position="213"/>
    </location>
    <ligand>
        <name>Mn(2+)</name>
        <dbReference type="ChEBI" id="CHEBI:29035"/>
    </ligand>
</feature>
<feature type="binding site" evidence="1">
    <location>
        <position position="213"/>
    </location>
    <ligand>
        <name>substrate</name>
    </ligand>
</feature>
<feature type="binding site" evidence="1">
    <location>
        <position position="232"/>
    </location>
    <ligand>
        <name>ATP</name>
        <dbReference type="ChEBI" id="CHEBI:30616"/>
    </ligand>
</feature>
<feature type="binding site" evidence="1">
    <location>
        <position position="232"/>
    </location>
    <ligand>
        <name>Mn(2+)</name>
        <dbReference type="ChEBI" id="CHEBI:29035"/>
    </ligand>
</feature>
<feature type="binding site" evidence="1">
    <location>
        <begin position="248"/>
        <end position="256"/>
    </location>
    <ligand>
        <name>ATP</name>
        <dbReference type="ChEBI" id="CHEBI:30616"/>
    </ligand>
</feature>
<feature type="binding site" evidence="1">
    <location>
        <position position="269"/>
    </location>
    <ligand>
        <name>Mn(2+)</name>
        <dbReference type="ChEBI" id="CHEBI:29035"/>
    </ligand>
</feature>
<feature type="binding site" evidence="1">
    <location>
        <position position="297"/>
    </location>
    <ligand>
        <name>ATP</name>
        <dbReference type="ChEBI" id="CHEBI:30616"/>
    </ligand>
</feature>
<feature type="binding site" evidence="1">
    <location>
        <position position="333"/>
    </location>
    <ligand>
        <name>ATP</name>
        <dbReference type="ChEBI" id="CHEBI:30616"/>
    </ligand>
</feature>
<feature type="binding site" evidence="1">
    <location>
        <position position="333"/>
    </location>
    <ligand>
        <name>substrate</name>
    </ligand>
</feature>
<feature type="binding site" evidence="1">
    <location>
        <begin position="449"/>
        <end position="450"/>
    </location>
    <ligand>
        <name>ATP</name>
        <dbReference type="ChEBI" id="CHEBI:30616"/>
    </ligand>
</feature>
<feature type="binding site" evidence="1">
    <location>
        <position position="455"/>
    </location>
    <ligand>
        <name>ATP</name>
        <dbReference type="ChEBI" id="CHEBI:30616"/>
    </ligand>
</feature>
<feature type="modified residue" description="N6-acetyllysine" evidence="1">
    <location>
        <position position="87"/>
    </location>
</feature>
<feature type="modified residue" description="N6-acetyllysine" evidence="1">
    <location>
        <position position="523"/>
    </location>
</feature>
<protein>
    <recommendedName>
        <fullName evidence="1">Phosphoenolpyruvate carboxykinase (ATP)</fullName>
        <shortName evidence="1">PCK</shortName>
        <shortName evidence="1">PEP carboxykinase</shortName>
        <shortName evidence="1">PEPCK</shortName>
        <ecNumber evidence="1">4.1.1.49</ecNumber>
    </recommendedName>
</protein>
<keyword id="KW-0007">Acetylation</keyword>
<keyword id="KW-0067">ATP-binding</keyword>
<keyword id="KW-0963">Cytoplasm</keyword>
<keyword id="KW-0210">Decarboxylase</keyword>
<keyword id="KW-0312">Gluconeogenesis</keyword>
<keyword id="KW-0456">Lyase</keyword>
<keyword id="KW-0464">Manganese</keyword>
<keyword id="KW-0479">Metal-binding</keyword>
<keyword id="KW-0547">Nucleotide-binding</keyword>
<keyword id="KW-1185">Reference proteome</keyword>
<evidence type="ECO:0000255" key="1">
    <source>
        <dbReference type="HAMAP-Rule" id="MF_00453"/>
    </source>
</evidence>
<dbReference type="EC" id="4.1.1.49" evidence="1"/>
<dbReference type="EMBL" id="CP000034">
    <property type="protein sequence ID" value="ABB63638.1"/>
    <property type="molecule type" value="Genomic_DNA"/>
</dbReference>
<dbReference type="RefSeq" id="WP_001265675.1">
    <property type="nucleotide sequence ID" value="NC_007606.1"/>
</dbReference>
<dbReference type="RefSeq" id="YP_405129.1">
    <property type="nucleotide sequence ID" value="NC_007606.1"/>
</dbReference>
<dbReference type="SMR" id="Q32AL7"/>
<dbReference type="STRING" id="300267.SDY_3673"/>
<dbReference type="EnsemblBacteria" id="ABB63638">
    <property type="protein sequence ID" value="ABB63638"/>
    <property type="gene ID" value="SDY_3673"/>
</dbReference>
<dbReference type="KEGG" id="sdy:SDY_3673"/>
<dbReference type="PATRIC" id="fig|300267.13.peg.4358"/>
<dbReference type="HOGENOM" id="CLU_018247_0_1_6"/>
<dbReference type="UniPathway" id="UPA00138"/>
<dbReference type="Proteomes" id="UP000002716">
    <property type="component" value="Chromosome"/>
</dbReference>
<dbReference type="GO" id="GO:0005829">
    <property type="term" value="C:cytosol"/>
    <property type="evidence" value="ECO:0007669"/>
    <property type="project" value="TreeGrafter"/>
</dbReference>
<dbReference type="GO" id="GO:0005524">
    <property type="term" value="F:ATP binding"/>
    <property type="evidence" value="ECO:0007669"/>
    <property type="project" value="UniProtKB-UniRule"/>
</dbReference>
<dbReference type="GO" id="GO:0046872">
    <property type="term" value="F:metal ion binding"/>
    <property type="evidence" value="ECO:0007669"/>
    <property type="project" value="UniProtKB-KW"/>
</dbReference>
<dbReference type="GO" id="GO:0004612">
    <property type="term" value="F:phosphoenolpyruvate carboxykinase (ATP) activity"/>
    <property type="evidence" value="ECO:0007669"/>
    <property type="project" value="UniProtKB-UniRule"/>
</dbReference>
<dbReference type="GO" id="GO:0006094">
    <property type="term" value="P:gluconeogenesis"/>
    <property type="evidence" value="ECO:0007669"/>
    <property type="project" value="UniProtKB-UniRule"/>
</dbReference>
<dbReference type="CDD" id="cd00484">
    <property type="entry name" value="PEPCK_ATP"/>
    <property type="match status" value="1"/>
</dbReference>
<dbReference type="FunFam" id="2.170.8.10:FF:000001">
    <property type="entry name" value="Phosphoenolpyruvate carboxykinase (ATP)"/>
    <property type="match status" value="1"/>
</dbReference>
<dbReference type="FunFam" id="3.40.449.10:FF:000001">
    <property type="entry name" value="Phosphoenolpyruvate carboxykinase (ATP)"/>
    <property type="match status" value="1"/>
</dbReference>
<dbReference type="Gene3D" id="3.90.228.20">
    <property type="match status" value="1"/>
</dbReference>
<dbReference type="Gene3D" id="3.40.449.10">
    <property type="entry name" value="Phosphoenolpyruvate Carboxykinase, domain 1"/>
    <property type="match status" value="1"/>
</dbReference>
<dbReference type="Gene3D" id="2.170.8.10">
    <property type="entry name" value="Phosphoenolpyruvate Carboxykinase, domain 2"/>
    <property type="match status" value="1"/>
</dbReference>
<dbReference type="HAMAP" id="MF_00453">
    <property type="entry name" value="PEPCK_ATP"/>
    <property type="match status" value="1"/>
</dbReference>
<dbReference type="InterPro" id="IPR001272">
    <property type="entry name" value="PEP_carboxykinase_ATP"/>
</dbReference>
<dbReference type="InterPro" id="IPR013035">
    <property type="entry name" value="PEP_carboxykinase_C"/>
</dbReference>
<dbReference type="InterPro" id="IPR008210">
    <property type="entry name" value="PEP_carboxykinase_N"/>
</dbReference>
<dbReference type="InterPro" id="IPR015994">
    <property type="entry name" value="PEPCK_ATP_CS"/>
</dbReference>
<dbReference type="NCBIfam" id="TIGR00224">
    <property type="entry name" value="pckA"/>
    <property type="match status" value="1"/>
</dbReference>
<dbReference type="NCBIfam" id="NF006819">
    <property type="entry name" value="PRK09344.1-1"/>
    <property type="match status" value="1"/>
</dbReference>
<dbReference type="NCBIfam" id="NF006820">
    <property type="entry name" value="PRK09344.1-2"/>
    <property type="match status" value="1"/>
</dbReference>
<dbReference type="NCBIfam" id="NF006821">
    <property type="entry name" value="PRK09344.1-3"/>
    <property type="match status" value="1"/>
</dbReference>
<dbReference type="PANTHER" id="PTHR30031:SF0">
    <property type="entry name" value="PHOSPHOENOLPYRUVATE CARBOXYKINASE (ATP)"/>
    <property type="match status" value="1"/>
</dbReference>
<dbReference type="PANTHER" id="PTHR30031">
    <property type="entry name" value="PHOSPHOENOLPYRUVATE CARBOXYKINASE ATP"/>
    <property type="match status" value="1"/>
</dbReference>
<dbReference type="Pfam" id="PF01293">
    <property type="entry name" value="PEPCK_ATP"/>
    <property type="match status" value="1"/>
</dbReference>
<dbReference type="PIRSF" id="PIRSF006294">
    <property type="entry name" value="PEP_crbxkin"/>
    <property type="match status" value="1"/>
</dbReference>
<dbReference type="SUPFAM" id="SSF68923">
    <property type="entry name" value="PEP carboxykinase N-terminal domain"/>
    <property type="match status" value="1"/>
</dbReference>
<dbReference type="SUPFAM" id="SSF53795">
    <property type="entry name" value="PEP carboxykinase-like"/>
    <property type="match status" value="1"/>
</dbReference>
<dbReference type="PROSITE" id="PS00532">
    <property type="entry name" value="PEPCK_ATP"/>
    <property type="match status" value="1"/>
</dbReference>